<sequence length="483" mass="56495">MATPLQIMPLPVWPITFLEDAVVYLSALFTPWFTAFCVLWLHRYVRLIVHCYSHWTYKSKPIPSKPSYTSDDVTVVIPTIHDNFDELRPSLESILATKPHELIMVTTADKFEDLQRVAKTLSSPNIRIFCTQYANKRIQVCEALPKITTRITIMADDDVTWPSTMMPWILAPFEDPKIGGVGTCQRVKRVREGGLGLRIWNWLGAAYIERRNFEISATHNMDGGTSCMSGRTGAYRSEILRDYEFLEGFMKEEWWGKILKADDDNFVSRWLVSHKWKTWIQYEQECELETTLEDNIKFLYQCSRWARSNWRSNWTSLVKERHVWKQQWWCTYALHIATFTSLAFVFDFLILAALWWGTEGWEPVNRNRAIYAQLAFLAFSKVVKLVGLFRRHPADIMFLPVSIIFGYFHGLIKIYAGLTLNMTSWGSRTDGDTDDAHRLAPGPVRCSSLNTPRSEHKLPHYMQERDEIVNEKQQMREEEWEHL</sequence>
<comment type="function">
    <text evidence="3">Glycosyltransferase that plays an important role in infection-related morphogenesis and pathogenesis (PubMed:31484736). Involved in stress tolerance and hyphal hydrophobicity via its regulation of the expression of nydrophobin MPG1 (PubMed:31484736). May regulate growth, pathogenicity, and cell wall integrity (CWI) through glycosylation of heat shock protein SSB1, and other (unidentified) substrates may contribute to conidiation (PubMed:31484736). Candidate proteins as potential substrates of GT2 include several heat shock proteins (SSB1/MGG_02503, MGG_06759 and MGG_06958), two coiled-coil domain-containing proteins (MGG_04321 and MGG_09571), aminopeptidase 2 (MGG_16472), and a nuclease domain-containing protein (MGG_12646) (PubMed:31484736).</text>
</comment>
<comment type="subcellular location">
    <subcellularLocation>
        <location evidence="5">Cell membrane</location>
        <topology evidence="1">Multi-pass membrane protein</topology>
    </subcellularLocation>
</comment>
<comment type="domain">
    <text evidence="3">The conserved DxD and QxxRW domains are necessary for the full function.</text>
</comment>
<comment type="disruption phenotype">
    <text evidence="3">Results in impairment of vegetative growth, conidiation, stress response, hyphal appressorium-mediated penetration, and pathogenicity (PubMed:31484736). Leads to altered glycoproteins during conidiation (PubMed:31484736). Significantly reduces the expression levels of hydropgobin MPG1 (PubMed:31484736).</text>
</comment>
<comment type="similarity">
    <text evidence="5">Belongs to the GT2 glycosyltransferase family.</text>
</comment>
<feature type="chain" id="PRO_0000448948" description="Type 2 glycosyltransferase">
    <location>
        <begin position="1"/>
        <end position="483"/>
    </location>
</feature>
<feature type="transmembrane region" description="Helical" evidence="1">
    <location>
        <begin position="21"/>
        <end position="41"/>
    </location>
</feature>
<feature type="transmembrane region" description="Helical" evidence="1">
    <location>
        <begin position="336"/>
        <end position="356"/>
    </location>
</feature>
<feature type="transmembrane region" description="Helical" evidence="1">
    <location>
        <begin position="369"/>
        <end position="389"/>
    </location>
</feature>
<feature type="transmembrane region" description="Helical" evidence="1">
    <location>
        <begin position="396"/>
        <end position="416"/>
    </location>
</feature>
<feature type="short sequence motif" description="Dxd motif" evidence="3">
    <location>
        <begin position="156"/>
        <end position="158"/>
    </location>
</feature>
<feature type="short sequence motif" description="QxxxRW motif" evidence="3">
    <location>
        <begin position="301"/>
        <end position="305"/>
    </location>
</feature>
<feature type="glycosylation site" description="N-linked (GlcNAc...) asparagine" evidence="2">
    <location>
        <position position="313"/>
    </location>
</feature>
<feature type="glycosylation site" description="N-linked (GlcNAc...) asparagine" evidence="2">
    <location>
        <position position="421"/>
    </location>
</feature>
<feature type="mutagenesis site" description="Leads to defective colony growth and loss of conidiation and pathogenicity." evidence="3">
    <original>D</original>
    <variation>R</variation>
    <location>
        <position position="156"/>
    </location>
</feature>
<feature type="mutagenesis site" description="Leads to defective colony growth and loss of conidiation and pathogenicity." evidence="3">
    <original>D</original>
    <variation>R</variation>
    <location>
        <position position="158"/>
    </location>
</feature>
<feature type="mutagenesis site" description="Leads to reduced conidiation and pathogenicity." evidence="3">
    <original>Q</original>
    <variation>R</variation>
    <location>
        <position position="301"/>
    </location>
</feature>
<evidence type="ECO:0000255" key="1"/>
<evidence type="ECO:0000255" key="2">
    <source>
        <dbReference type="PROSITE-ProRule" id="PRU00498"/>
    </source>
</evidence>
<evidence type="ECO:0000269" key="3">
    <source>
    </source>
</evidence>
<evidence type="ECO:0000303" key="4">
    <source>
    </source>
</evidence>
<evidence type="ECO:0000305" key="5"/>
<evidence type="ECO:0000305" key="6">
    <source>
    </source>
</evidence>
<proteinExistence type="evidence at protein level"/>
<reference key="1">
    <citation type="journal article" date="2005" name="Nature">
        <title>The genome sequence of the rice blast fungus Magnaporthe grisea.</title>
        <authorList>
            <person name="Dean R.A."/>
            <person name="Talbot N.J."/>
            <person name="Ebbole D.J."/>
            <person name="Farman M.L."/>
            <person name="Mitchell T.K."/>
            <person name="Orbach M.J."/>
            <person name="Thon M.R."/>
            <person name="Kulkarni R."/>
            <person name="Xu J.-R."/>
            <person name="Pan H."/>
            <person name="Read N.D."/>
            <person name="Lee Y.-H."/>
            <person name="Carbone I."/>
            <person name="Brown D."/>
            <person name="Oh Y.Y."/>
            <person name="Donofrio N."/>
            <person name="Jeong J.S."/>
            <person name="Soanes D.M."/>
            <person name="Djonovic S."/>
            <person name="Kolomiets E."/>
            <person name="Rehmeyer C."/>
            <person name="Li W."/>
            <person name="Harding M."/>
            <person name="Kim S."/>
            <person name="Lebrun M.-H."/>
            <person name="Bohnert H."/>
            <person name="Coughlan S."/>
            <person name="Butler J."/>
            <person name="Calvo S.E."/>
            <person name="Ma L.-J."/>
            <person name="Nicol R."/>
            <person name="Purcell S."/>
            <person name="Nusbaum C."/>
            <person name="Galagan J.E."/>
            <person name="Birren B.W."/>
        </authorList>
    </citation>
    <scope>NUCLEOTIDE SEQUENCE [LARGE SCALE GENOMIC DNA]</scope>
    <source>
        <strain>70-15 / ATCC MYA-4617 / FGSC 8958</strain>
    </source>
</reference>
<reference key="2">
    <citation type="journal article" date="2019" name="MSphere">
        <title>MoGT2 is essential for morphogenesis and pathogenicity of Magnaporthe oryzae.</title>
        <authorList>
            <person name="Deng S."/>
            <person name="Sun W."/>
            <person name="Dong L."/>
            <person name="Cui G."/>
            <person name="Deng Y.Z."/>
        </authorList>
    </citation>
    <scope>FUNCTION</scope>
    <scope>DISRUPTION PHENOTYPE</scope>
    <scope>DOMAIN</scope>
    <scope>MUTAGENESIS OF ASP-156; ASP-158 AND GLN-301</scope>
</reference>
<accession>G4MWY1</accession>
<name>GT2_PYRO7</name>
<gene>
    <name evidence="4" type="primary">GT2</name>
    <name type="ORF">MGG_01191</name>
</gene>
<protein>
    <recommendedName>
        <fullName evidence="4">Type 2 glycosyltransferase</fullName>
        <ecNumber evidence="6">2.4.1.-</ecNumber>
    </recommendedName>
</protein>
<dbReference type="EC" id="2.4.1.-" evidence="6"/>
<dbReference type="EMBL" id="CM001232">
    <property type="protein sequence ID" value="EHA54273.1"/>
    <property type="molecule type" value="Genomic_DNA"/>
</dbReference>
<dbReference type="RefSeq" id="XP_003714080.1">
    <property type="nucleotide sequence ID" value="XM_003714032.1"/>
</dbReference>
<dbReference type="SMR" id="G4MWY1"/>
<dbReference type="STRING" id="242507.G4MWY1"/>
<dbReference type="CAZy" id="GT2">
    <property type="family name" value="Glycosyltransferase Family 2"/>
</dbReference>
<dbReference type="GlyCosmos" id="G4MWY1">
    <property type="glycosylation" value="2 sites, No reported glycans"/>
</dbReference>
<dbReference type="EnsemblFungi" id="MGG_01191T0">
    <property type="protein sequence ID" value="MGG_01191T0"/>
    <property type="gene ID" value="MGG_01191"/>
</dbReference>
<dbReference type="GeneID" id="2679792"/>
<dbReference type="KEGG" id="mgr:MGG_01191"/>
<dbReference type="VEuPathDB" id="FungiDB:MGG_01191"/>
<dbReference type="eggNOG" id="KOG2571">
    <property type="taxonomic scope" value="Eukaryota"/>
</dbReference>
<dbReference type="HOGENOM" id="CLU_019940_4_1_1"/>
<dbReference type="InParanoid" id="G4MWY1"/>
<dbReference type="OMA" id="HEKHIWY"/>
<dbReference type="OrthoDB" id="3828420at2759"/>
<dbReference type="Proteomes" id="UP000009058">
    <property type="component" value="Chromosome 2"/>
</dbReference>
<dbReference type="GO" id="GO:0005886">
    <property type="term" value="C:plasma membrane"/>
    <property type="evidence" value="ECO:0007669"/>
    <property type="project" value="UniProtKB-SubCell"/>
</dbReference>
<dbReference type="GO" id="GO:0016757">
    <property type="term" value="F:glycosyltransferase activity"/>
    <property type="evidence" value="ECO:0000315"/>
    <property type="project" value="PHI-base"/>
</dbReference>
<dbReference type="CDD" id="cd06434">
    <property type="entry name" value="GT2_HAS"/>
    <property type="match status" value="1"/>
</dbReference>
<dbReference type="Gene3D" id="3.90.550.10">
    <property type="entry name" value="Spore Coat Polysaccharide Biosynthesis Protein SpsA, Chain A"/>
    <property type="match status" value="1"/>
</dbReference>
<dbReference type="InterPro" id="IPR052427">
    <property type="entry name" value="Glycosyltrans_GT2/GT47"/>
</dbReference>
<dbReference type="InterPro" id="IPR029044">
    <property type="entry name" value="Nucleotide-diphossugar_trans"/>
</dbReference>
<dbReference type="PANTHER" id="PTHR47844:SF1">
    <property type="entry name" value="EXOSTOSIN-LIKE 2"/>
    <property type="match status" value="1"/>
</dbReference>
<dbReference type="PANTHER" id="PTHR47844">
    <property type="entry name" value="SYNTHASE CPS1, PUTATIVE (AFU_ORTHOLOGUE AFUA_7G02500)-RELATED"/>
    <property type="match status" value="1"/>
</dbReference>
<dbReference type="Pfam" id="PF13641">
    <property type="entry name" value="Glyco_tranf_2_3"/>
    <property type="match status" value="1"/>
</dbReference>
<dbReference type="SUPFAM" id="SSF53448">
    <property type="entry name" value="Nucleotide-diphospho-sugar transferases"/>
    <property type="match status" value="1"/>
</dbReference>
<organism>
    <name type="scientific">Pyricularia oryzae (strain 70-15 / ATCC MYA-4617 / FGSC 8958)</name>
    <name type="common">Rice blast fungus</name>
    <name type="synonym">Magnaporthe oryzae</name>
    <dbReference type="NCBI Taxonomy" id="242507"/>
    <lineage>
        <taxon>Eukaryota</taxon>
        <taxon>Fungi</taxon>
        <taxon>Dikarya</taxon>
        <taxon>Ascomycota</taxon>
        <taxon>Pezizomycotina</taxon>
        <taxon>Sordariomycetes</taxon>
        <taxon>Sordariomycetidae</taxon>
        <taxon>Magnaporthales</taxon>
        <taxon>Pyriculariaceae</taxon>
        <taxon>Pyricularia</taxon>
    </lineage>
</organism>
<keyword id="KW-1003">Cell membrane</keyword>
<keyword id="KW-0325">Glycoprotein</keyword>
<keyword id="KW-0328">Glycosyltransferase</keyword>
<keyword id="KW-0472">Membrane</keyword>
<keyword id="KW-1185">Reference proteome</keyword>
<keyword id="KW-0808">Transferase</keyword>
<keyword id="KW-0812">Transmembrane</keyword>
<keyword id="KW-1133">Transmembrane helix</keyword>
<keyword id="KW-0843">Virulence</keyword>